<proteinExistence type="inferred from homology"/>
<protein>
    <recommendedName>
        <fullName evidence="1">L-carnitine/gamma-butyrobetaine antiporter</fullName>
    </recommendedName>
</protein>
<sequence length="505" mass="56643">MKNEKKKSGIEPKVFFPPLIIVGILCWLTVRDLDAANVVINAVFSYVTNVWGWAFEWYMVVMLFGWFWLVFGPYAKKRLGDEKPEFSTASWIFMMFASCTSAAVLFWGSIEIYYYISTPPFGLEPNSTGAKEIGLAYSLFHWGPLPWATYSFLSVAFAYFFFVRKMDVIRPSSTLVPLVGEKHAKGLFGTIVDNFYLVALIFAMGTSLGLATPLVTECMQWLFGIPHTLQLDAIIITCWIILNAICVACGLQKGVRIASDVRSYLSFLMLGWVFIVSGASFIMNYFTDSVGMLLMHLPRMLFYTDAIGKGGFPQGWTVFYWAWWVIYAIQMSIFLARISRGRTVRELCFGMVMGLTASTWILWTVLGSNTLLLMDKNILNIPQLIEQHGVARAIIETWAALPLSTATMWGFFILCFIATVTLINACSYTLAMSTCREVRDGEEPPLLVRIGWSVLVGIIGIVLLALGGLKPIQTAIIAGGCPLFFVNIMVTLSFIKDAKVHWKDK</sequence>
<accession>B5F753</accession>
<dbReference type="EMBL" id="CP001138">
    <property type="protein sequence ID" value="ACH50508.1"/>
    <property type="molecule type" value="Genomic_DNA"/>
</dbReference>
<dbReference type="RefSeq" id="WP_000787073.1">
    <property type="nucleotide sequence ID" value="NC_011149.1"/>
</dbReference>
<dbReference type="SMR" id="B5F753"/>
<dbReference type="KEGG" id="sea:SeAg_B0081"/>
<dbReference type="HOGENOM" id="CLU_010118_6_0_6"/>
<dbReference type="UniPathway" id="UPA00117"/>
<dbReference type="Proteomes" id="UP000008819">
    <property type="component" value="Chromosome"/>
</dbReference>
<dbReference type="GO" id="GO:0005886">
    <property type="term" value="C:plasma membrane"/>
    <property type="evidence" value="ECO:0007669"/>
    <property type="project" value="UniProtKB-SubCell"/>
</dbReference>
<dbReference type="GO" id="GO:0044667">
    <property type="term" value="F:(R)-carnitine:4-(trimethylammonio)butanoate antiporter activity"/>
    <property type="evidence" value="ECO:0007669"/>
    <property type="project" value="UniProtKB-UniRule"/>
</dbReference>
<dbReference type="GO" id="GO:1900751">
    <property type="term" value="P:4-(trimethylammonio)butanoate transport"/>
    <property type="evidence" value="ECO:0007669"/>
    <property type="project" value="InterPro"/>
</dbReference>
<dbReference type="GO" id="GO:0009437">
    <property type="term" value="P:carnitine metabolic process"/>
    <property type="evidence" value="ECO:0007669"/>
    <property type="project" value="UniProtKB-UniRule"/>
</dbReference>
<dbReference type="HAMAP" id="MF_01049">
    <property type="entry name" value="CaiT"/>
    <property type="match status" value="1"/>
</dbReference>
<dbReference type="InterPro" id="IPR018093">
    <property type="entry name" value="BCCT_CS"/>
</dbReference>
<dbReference type="InterPro" id="IPR000060">
    <property type="entry name" value="BCCT_transptr"/>
</dbReference>
<dbReference type="InterPro" id="IPR023449">
    <property type="entry name" value="BCCT_transptr_CaiT"/>
</dbReference>
<dbReference type="NCBIfam" id="TIGR00842">
    <property type="entry name" value="bcct"/>
    <property type="match status" value="1"/>
</dbReference>
<dbReference type="NCBIfam" id="NF002887">
    <property type="entry name" value="PRK03356.1"/>
    <property type="match status" value="1"/>
</dbReference>
<dbReference type="PANTHER" id="PTHR30047">
    <property type="entry name" value="HIGH-AFFINITY CHOLINE TRANSPORT PROTEIN-RELATED"/>
    <property type="match status" value="1"/>
</dbReference>
<dbReference type="PANTHER" id="PTHR30047:SF11">
    <property type="entry name" value="L-CARNITINE_GAMMA-BUTYROBETAINE ANTIPORTER"/>
    <property type="match status" value="1"/>
</dbReference>
<dbReference type="Pfam" id="PF02028">
    <property type="entry name" value="BCCT"/>
    <property type="match status" value="1"/>
</dbReference>
<dbReference type="PROSITE" id="PS01303">
    <property type="entry name" value="BCCT"/>
    <property type="match status" value="1"/>
</dbReference>
<feature type="chain" id="PRO_1000136237" description="L-carnitine/gamma-butyrobetaine antiporter">
    <location>
        <begin position="1"/>
        <end position="505"/>
    </location>
</feature>
<feature type="transmembrane region" description="Helical" evidence="1">
    <location>
        <begin position="10"/>
        <end position="30"/>
    </location>
</feature>
<feature type="transmembrane region" description="Helical" evidence="1">
    <location>
        <begin position="51"/>
        <end position="71"/>
    </location>
</feature>
<feature type="transmembrane region" description="Helical" evidence="1">
    <location>
        <begin position="92"/>
        <end position="112"/>
    </location>
</feature>
<feature type="transmembrane region" description="Helical" evidence="1">
    <location>
        <begin position="143"/>
        <end position="163"/>
    </location>
</feature>
<feature type="transmembrane region" description="Helical" evidence="1">
    <location>
        <begin position="195"/>
        <end position="215"/>
    </location>
</feature>
<feature type="transmembrane region" description="Helical" evidence="1">
    <location>
        <begin position="231"/>
        <end position="251"/>
    </location>
</feature>
<feature type="transmembrane region" description="Helical" evidence="1">
    <location>
        <begin position="263"/>
        <end position="283"/>
    </location>
</feature>
<feature type="transmembrane region" description="Helical" evidence="1">
    <location>
        <begin position="316"/>
        <end position="336"/>
    </location>
</feature>
<feature type="transmembrane region" description="Helical" evidence="1">
    <location>
        <begin position="347"/>
        <end position="367"/>
    </location>
</feature>
<feature type="transmembrane region" description="Helical" evidence="1">
    <location>
        <begin position="403"/>
        <end position="423"/>
    </location>
</feature>
<feature type="transmembrane region" description="Helical" evidence="1">
    <location>
        <begin position="446"/>
        <end position="466"/>
    </location>
</feature>
<feature type="transmembrane region" description="Helical" evidence="1">
    <location>
        <begin position="475"/>
        <end position="495"/>
    </location>
</feature>
<organism>
    <name type="scientific">Salmonella agona (strain SL483)</name>
    <dbReference type="NCBI Taxonomy" id="454166"/>
    <lineage>
        <taxon>Bacteria</taxon>
        <taxon>Pseudomonadati</taxon>
        <taxon>Pseudomonadota</taxon>
        <taxon>Gammaproteobacteria</taxon>
        <taxon>Enterobacterales</taxon>
        <taxon>Enterobacteriaceae</taxon>
        <taxon>Salmonella</taxon>
    </lineage>
</organism>
<comment type="function">
    <text evidence="1">Catalyzes the exchange of L-carnitine for gamma-butyrobetaine.</text>
</comment>
<comment type="catalytic activity">
    <reaction evidence="1">
        <text>4-(trimethylamino)butanoate(in) + (R)-carnitine(out) = 4-(trimethylamino)butanoate(out) + (R)-carnitine(in)</text>
        <dbReference type="Rhea" id="RHEA:29427"/>
        <dbReference type="ChEBI" id="CHEBI:16244"/>
        <dbReference type="ChEBI" id="CHEBI:16347"/>
    </reaction>
</comment>
<comment type="pathway">
    <text evidence="1">Amine and polyamine metabolism; carnitine metabolism.</text>
</comment>
<comment type="subunit">
    <text evidence="1">Homotrimer.</text>
</comment>
<comment type="subcellular location">
    <subcellularLocation>
        <location evidence="1">Cell inner membrane</location>
        <topology evidence="1">Multi-pass membrane protein</topology>
    </subcellularLocation>
</comment>
<comment type="similarity">
    <text evidence="1">Belongs to the BCCT transporter (TC 2.A.15) family. CaiT subfamily.</text>
</comment>
<name>CAIT_SALA4</name>
<reference key="1">
    <citation type="journal article" date="2011" name="J. Bacteriol.">
        <title>Comparative genomics of 28 Salmonella enterica isolates: evidence for CRISPR-mediated adaptive sublineage evolution.</title>
        <authorList>
            <person name="Fricke W.F."/>
            <person name="Mammel M.K."/>
            <person name="McDermott P.F."/>
            <person name="Tartera C."/>
            <person name="White D.G."/>
            <person name="Leclerc J.E."/>
            <person name="Ravel J."/>
            <person name="Cebula T.A."/>
        </authorList>
    </citation>
    <scope>NUCLEOTIDE SEQUENCE [LARGE SCALE GENOMIC DNA]</scope>
    <source>
        <strain>SL483</strain>
    </source>
</reference>
<evidence type="ECO:0000255" key="1">
    <source>
        <dbReference type="HAMAP-Rule" id="MF_01049"/>
    </source>
</evidence>
<keyword id="KW-0050">Antiport</keyword>
<keyword id="KW-0997">Cell inner membrane</keyword>
<keyword id="KW-1003">Cell membrane</keyword>
<keyword id="KW-0472">Membrane</keyword>
<keyword id="KW-0812">Transmembrane</keyword>
<keyword id="KW-1133">Transmembrane helix</keyword>
<keyword id="KW-0813">Transport</keyword>
<gene>
    <name evidence="1" type="primary">caiT</name>
    <name type="ordered locus">SeAg_B0081</name>
</gene>